<evidence type="ECO:0000250" key="1"/>
<evidence type="ECO:0000250" key="2">
    <source>
        <dbReference type="UniProtKB" id="Q9BZM2"/>
    </source>
</evidence>
<evidence type="ECO:0000255" key="3"/>
<evidence type="ECO:0000255" key="4">
    <source>
        <dbReference type="PROSITE-ProRule" id="PRU10035"/>
    </source>
</evidence>
<evidence type="ECO:0000269" key="5">
    <source>
    </source>
</evidence>
<evidence type="ECO:0000269" key="6">
    <source>
    </source>
</evidence>
<evidence type="ECO:0000303" key="7">
    <source>
    </source>
</evidence>
<evidence type="ECO:0000303" key="8">
    <source>
    </source>
</evidence>
<evidence type="ECO:0000303" key="9">
    <source>
    </source>
</evidence>
<evidence type="ECO:0000305" key="10"/>
<evidence type="ECO:0000305" key="11">
    <source>
    </source>
</evidence>
<protein>
    <recommendedName>
        <fullName evidence="7">Group IIF secretory phospholipase A2</fullName>
        <shortName>GIIF sPLA2</shortName>
        <shortName>sPLA2-IIF</shortName>
        <ecNumber evidence="6">3.1.1.4</ecNumber>
    </recommendedName>
    <alternativeName>
        <fullName>Phosphatidylcholine 2-acylhydrolase 2F</fullName>
    </alternativeName>
</protein>
<dbReference type="EC" id="3.1.1.4" evidence="6"/>
<dbReference type="EMBL" id="AF166099">
    <property type="protein sequence ID" value="AAF04500.2"/>
    <property type="molecule type" value="mRNA"/>
</dbReference>
<dbReference type="EMBL" id="AK029254">
    <property type="protein sequence ID" value="BAC26357.1"/>
    <property type="molecule type" value="mRNA"/>
</dbReference>
<dbReference type="EMBL" id="AL844178">
    <property type="status" value="NOT_ANNOTATED_CDS"/>
    <property type="molecule type" value="Genomic_DNA"/>
</dbReference>
<dbReference type="EMBL" id="BC125567">
    <property type="protein sequence ID" value="AAI25568.1"/>
    <property type="molecule type" value="mRNA"/>
</dbReference>
<dbReference type="CCDS" id="CCDS18832.1">
    <molecule id="Q9QZT4-2"/>
</dbReference>
<dbReference type="RefSeq" id="NP_001347804.1">
    <molecule id="Q9QZT4-1"/>
    <property type="nucleotide sequence ID" value="NM_001360875.2"/>
</dbReference>
<dbReference type="RefSeq" id="NP_036175.2">
    <molecule id="Q9QZT4-2"/>
    <property type="nucleotide sequence ID" value="NM_012045.4"/>
</dbReference>
<dbReference type="SMR" id="Q9QZT4"/>
<dbReference type="FunCoup" id="Q9QZT4">
    <property type="interactions" value="411"/>
</dbReference>
<dbReference type="STRING" id="10090.ENSMUSP00000030526"/>
<dbReference type="BindingDB" id="Q9QZT4"/>
<dbReference type="ChEMBL" id="CHEMBL5361"/>
<dbReference type="GlyCosmos" id="Q9QZT4">
    <property type="glycosylation" value="3 sites, No reported glycans"/>
</dbReference>
<dbReference type="GlyGen" id="Q9QZT4">
    <property type="glycosylation" value="3 sites"/>
</dbReference>
<dbReference type="iPTMnet" id="Q9QZT4"/>
<dbReference type="PhosphoSitePlus" id="Q9QZT4"/>
<dbReference type="PaxDb" id="10090-ENSMUSP00000030526"/>
<dbReference type="ProteomicsDB" id="294321">
    <molecule id="Q9QZT4-1"/>
</dbReference>
<dbReference type="ProteomicsDB" id="294322">
    <molecule id="Q9QZT4-2"/>
</dbReference>
<dbReference type="Antibodypedia" id="68368">
    <property type="antibodies" value="5 antibodies from 3 providers"/>
</dbReference>
<dbReference type="DNASU" id="26971"/>
<dbReference type="Ensembl" id="ENSMUST00000030526.7">
    <molecule id="Q9QZT4-2"/>
    <property type="protein sequence ID" value="ENSMUSP00000030526.7"/>
    <property type="gene ID" value="ENSMUSG00000028749.8"/>
</dbReference>
<dbReference type="GeneID" id="26971"/>
<dbReference type="KEGG" id="mmu:26971"/>
<dbReference type="UCSC" id="uc008vlf.2">
    <molecule id="Q9QZT4-2"/>
    <property type="organism name" value="mouse"/>
</dbReference>
<dbReference type="AGR" id="MGI:1349661"/>
<dbReference type="CTD" id="64600"/>
<dbReference type="MGI" id="MGI:1349661">
    <property type="gene designation" value="Pla2g2f"/>
</dbReference>
<dbReference type="VEuPathDB" id="HostDB:ENSMUSG00000028749"/>
<dbReference type="eggNOG" id="KOG4087">
    <property type="taxonomic scope" value="Eukaryota"/>
</dbReference>
<dbReference type="GeneTree" id="ENSGT00940000161819"/>
<dbReference type="HOGENOM" id="CLU_090683_2_0_1"/>
<dbReference type="InParanoid" id="Q9QZT4"/>
<dbReference type="OMA" id="ECDKNVV"/>
<dbReference type="OrthoDB" id="58655at9989"/>
<dbReference type="PhylomeDB" id="Q9QZT4"/>
<dbReference type="TreeFam" id="TF319283"/>
<dbReference type="BRENDA" id="3.1.1.4">
    <property type="organism ID" value="3474"/>
</dbReference>
<dbReference type="Reactome" id="R-MMU-1482788">
    <property type="pathway name" value="Acyl chain remodelling of PC"/>
</dbReference>
<dbReference type="Reactome" id="R-MMU-1482801">
    <property type="pathway name" value="Acyl chain remodelling of PS"/>
</dbReference>
<dbReference type="Reactome" id="R-MMU-1482839">
    <property type="pathway name" value="Acyl chain remodelling of PE"/>
</dbReference>
<dbReference type="Reactome" id="R-MMU-1482922">
    <property type="pathway name" value="Acyl chain remodelling of PI"/>
</dbReference>
<dbReference type="Reactome" id="R-MMU-1482925">
    <property type="pathway name" value="Acyl chain remodelling of PG"/>
</dbReference>
<dbReference type="Reactome" id="R-MMU-1483166">
    <property type="pathway name" value="Synthesis of PA"/>
</dbReference>
<dbReference type="BioGRID-ORCS" id="26971">
    <property type="hits" value="3 hits in 80 CRISPR screens"/>
</dbReference>
<dbReference type="ChiTaRS" id="Pla2g2f">
    <property type="organism name" value="mouse"/>
</dbReference>
<dbReference type="PRO" id="PR:Q9QZT4"/>
<dbReference type="Proteomes" id="UP000000589">
    <property type="component" value="Chromosome 4"/>
</dbReference>
<dbReference type="RNAct" id="Q9QZT4">
    <property type="molecule type" value="protein"/>
</dbReference>
<dbReference type="Bgee" id="ENSMUSG00000028749">
    <property type="expression patterns" value="Expressed in lip and 64 other cell types or tissues"/>
</dbReference>
<dbReference type="GO" id="GO:0005576">
    <property type="term" value="C:extracellular region"/>
    <property type="evidence" value="ECO:0007669"/>
    <property type="project" value="UniProtKB-SubCell"/>
</dbReference>
<dbReference type="GO" id="GO:0005886">
    <property type="term" value="C:plasma membrane"/>
    <property type="evidence" value="ECO:0007669"/>
    <property type="project" value="UniProtKB-SubCell"/>
</dbReference>
<dbReference type="GO" id="GO:0005509">
    <property type="term" value="F:calcium ion binding"/>
    <property type="evidence" value="ECO:0007669"/>
    <property type="project" value="InterPro"/>
</dbReference>
<dbReference type="GO" id="GO:0047498">
    <property type="term" value="F:calcium-dependent phospholipase A2 activity"/>
    <property type="evidence" value="ECO:0000250"/>
    <property type="project" value="UniProtKB"/>
</dbReference>
<dbReference type="GO" id="GO:0004623">
    <property type="term" value="F:phospholipase A2 activity"/>
    <property type="evidence" value="ECO:0000314"/>
    <property type="project" value="MGI"/>
</dbReference>
<dbReference type="GO" id="GO:0019369">
    <property type="term" value="P:arachidonate metabolic process"/>
    <property type="evidence" value="ECO:0000315"/>
    <property type="project" value="UniProtKB"/>
</dbReference>
<dbReference type="GO" id="GO:0050482">
    <property type="term" value="P:arachidonate secretion"/>
    <property type="evidence" value="ECO:0007669"/>
    <property type="project" value="InterPro"/>
</dbReference>
<dbReference type="GO" id="GO:0045087">
    <property type="term" value="P:innate immune response"/>
    <property type="evidence" value="ECO:0007669"/>
    <property type="project" value="UniProtKB-KW"/>
</dbReference>
<dbReference type="GO" id="GO:0016042">
    <property type="term" value="P:lipid catabolic process"/>
    <property type="evidence" value="ECO:0007669"/>
    <property type="project" value="UniProtKB-KW"/>
</dbReference>
<dbReference type="GO" id="GO:0042130">
    <property type="term" value="P:negative regulation of T cell proliferation"/>
    <property type="evidence" value="ECO:0000314"/>
    <property type="project" value="MGI"/>
</dbReference>
<dbReference type="GO" id="GO:0036151">
    <property type="term" value="P:phosphatidylcholine acyl-chain remodeling"/>
    <property type="evidence" value="ECO:0000250"/>
    <property type="project" value="UniProtKB"/>
</dbReference>
<dbReference type="GO" id="GO:0036152">
    <property type="term" value="P:phosphatidylethanolamine acyl-chain remodeling"/>
    <property type="evidence" value="ECO:0000314"/>
    <property type="project" value="UniProtKB"/>
</dbReference>
<dbReference type="GO" id="GO:0036148">
    <property type="term" value="P:phosphatidylglycerol acyl-chain remodeling"/>
    <property type="evidence" value="ECO:0000250"/>
    <property type="project" value="UniProtKB"/>
</dbReference>
<dbReference type="GO" id="GO:0036150">
    <property type="term" value="P:phosphatidylserine acyl-chain remodeling"/>
    <property type="evidence" value="ECO:0000250"/>
    <property type="project" value="UniProtKB"/>
</dbReference>
<dbReference type="GO" id="GO:0006644">
    <property type="term" value="P:phospholipid metabolic process"/>
    <property type="evidence" value="ECO:0000314"/>
    <property type="project" value="MGI"/>
</dbReference>
<dbReference type="CDD" id="cd00125">
    <property type="entry name" value="PLA2c"/>
    <property type="match status" value="1"/>
</dbReference>
<dbReference type="FunFam" id="1.20.90.10:FF:000001">
    <property type="entry name" value="Basic phospholipase A2 homolog"/>
    <property type="match status" value="1"/>
</dbReference>
<dbReference type="Gene3D" id="1.20.90.10">
    <property type="entry name" value="Phospholipase A2 domain"/>
    <property type="match status" value="1"/>
</dbReference>
<dbReference type="InterPro" id="IPR001211">
    <property type="entry name" value="PLipase_A2"/>
</dbReference>
<dbReference type="InterPro" id="IPR016090">
    <property type="entry name" value="PLipase_A2_dom"/>
</dbReference>
<dbReference type="InterPro" id="IPR036444">
    <property type="entry name" value="PLipase_A2_dom_sf"/>
</dbReference>
<dbReference type="InterPro" id="IPR033113">
    <property type="entry name" value="PLipase_A2_His_AS"/>
</dbReference>
<dbReference type="PANTHER" id="PTHR11716:SF8">
    <property type="entry name" value="GROUP IIF SECRETORY PHOSPHOLIPASE A2"/>
    <property type="match status" value="1"/>
</dbReference>
<dbReference type="PANTHER" id="PTHR11716">
    <property type="entry name" value="PHOSPHOLIPASE A2 FAMILY MEMBER"/>
    <property type="match status" value="1"/>
</dbReference>
<dbReference type="Pfam" id="PF00068">
    <property type="entry name" value="Phospholip_A2_1"/>
    <property type="match status" value="1"/>
</dbReference>
<dbReference type="PRINTS" id="PR00389">
    <property type="entry name" value="PHPHLIPASEA2"/>
</dbReference>
<dbReference type="SMART" id="SM00085">
    <property type="entry name" value="PA2c"/>
    <property type="match status" value="1"/>
</dbReference>
<dbReference type="SUPFAM" id="SSF48619">
    <property type="entry name" value="Phospholipase A2, PLA2"/>
    <property type="match status" value="1"/>
</dbReference>
<dbReference type="PROSITE" id="PS00118">
    <property type="entry name" value="PA2_HIS"/>
    <property type="match status" value="1"/>
</dbReference>
<sequence>MKKFFAIAVLAGSVVTTAHSSLLNLKSMVEAITHRNSILSFVGYGCYCGLGGRGHPMDEVDWCCHAHDCCYEKLFEQGCRPYVDHYDHRIENGTMIVCTELNETECDKQTCECDKSLTLCLKDHPYRNKYRGYFNVYCQGPTPNCSIYDPYPEEVTCGHGLPATPVST</sequence>
<proteinExistence type="evidence at protein level"/>
<accession>Q9QZT4</accession>
<accession>Q8CE14</accession>
<gene>
    <name type="primary">Pla2g2f</name>
</gene>
<keyword id="KW-0025">Alternative splicing</keyword>
<keyword id="KW-0106">Calcium</keyword>
<keyword id="KW-1003">Cell membrane</keyword>
<keyword id="KW-1015">Disulfide bond</keyword>
<keyword id="KW-0325">Glycoprotein</keyword>
<keyword id="KW-0378">Hydrolase</keyword>
<keyword id="KW-0391">Immunity</keyword>
<keyword id="KW-0399">Innate immunity</keyword>
<keyword id="KW-0442">Lipid degradation</keyword>
<keyword id="KW-0443">Lipid metabolism</keyword>
<keyword id="KW-0472">Membrane</keyword>
<keyword id="KW-0479">Metal-binding</keyword>
<keyword id="KW-1185">Reference proteome</keyword>
<keyword id="KW-0964">Secreted</keyword>
<keyword id="KW-0732">Signal</keyword>
<organism>
    <name type="scientific">Mus musculus</name>
    <name type="common">Mouse</name>
    <dbReference type="NCBI Taxonomy" id="10090"/>
    <lineage>
        <taxon>Eukaryota</taxon>
        <taxon>Metazoa</taxon>
        <taxon>Chordata</taxon>
        <taxon>Craniata</taxon>
        <taxon>Vertebrata</taxon>
        <taxon>Euteleostomi</taxon>
        <taxon>Mammalia</taxon>
        <taxon>Eutheria</taxon>
        <taxon>Euarchontoglires</taxon>
        <taxon>Glires</taxon>
        <taxon>Rodentia</taxon>
        <taxon>Myomorpha</taxon>
        <taxon>Muroidea</taxon>
        <taxon>Muridae</taxon>
        <taxon>Murinae</taxon>
        <taxon>Mus</taxon>
        <taxon>Mus</taxon>
    </lineage>
</organism>
<comment type="function">
    <text evidence="5 6">Secretory calcium-dependent phospholipase A2 that primarily targets extracellular phospholipids (PubMed:10531313). Hydrolyzes the ester bond of the fatty acyl group attached at the sn-2 position of phospholipids (phospholipase A2 activity), the catalytic efficiency decreasing in the following order: phosphatidylglycerols &gt; phosphatidylethanolamines &gt; phosphatidylcholines &gt; phosphatidylserines (PubMed:10531313, PubMed:11877435). May play a role in lipid mediator production in inflammatory conditions, by providing arachidonic acid to downstream cyclooxygenases and lipoxygenases (PubMed:10531313).</text>
</comment>
<comment type="catalytic activity">
    <reaction evidence="4 6">
        <text>a 1,2-diacyl-sn-glycero-3-phosphocholine + H2O = a 1-acyl-sn-glycero-3-phosphocholine + a fatty acid + H(+)</text>
        <dbReference type="Rhea" id="RHEA:15801"/>
        <dbReference type="ChEBI" id="CHEBI:15377"/>
        <dbReference type="ChEBI" id="CHEBI:15378"/>
        <dbReference type="ChEBI" id="CHEBI:28868"/>
        <dbReference type="ChEBI" id="CHEBI:57643"/>
        <dbReference type="ChEBI" id="CHEBI:58168"/>
        <dbReference type="EC" id="3.1.1.4"/>
    </reaction>
    <physiologicalReaction direction="left-to-right" evidence="11">
        <dbReference type="Rhea" id="RHEA:15802"/>
    </physiologicalReaction>
</comment>
<comment type="catalytic activity">
    <reaction evidence="2">
        <text>1-hexadecanoyl-2-(9Z-octadecenoyl)-sn-glycero-3-phospho-(1'-sn-glycerol) + H2O = 1-hexadecanoyl-sn-glycero-3-phospho-(1'-sn-glycerol) + (9Z)-octadecenoate + H(+)</text>
        <dbReference type="Rhea" id="RHEA:40919"/>
        <dbReference type="ChEBI" id="CHEBI:15377"/>
        <dbReference type="ChEBI" id="CHEBI:15378"/>
        <dbReference type="ChEBI" id="CHEBI:30823"/>
        <dbReference type="ChEBI" id="CHEBI:72841"/>
        <dbReference type="ChEBI" id="CHEBI:75158"/>
    </reaction>
    <physiologicalReaction direction="left-to-right" evidence="2">
        <dbReference type="Rhea" id="RHEA:40920"/>
    </physiologicalReaction>
</comment>
<comment type="catalytic activity">
    <reaction evidence="6">
        <text>1-hexadecanoyl-2-(9Z,12Z-octadecadienoyl)-sn-glycero-3-phosphoethanolamine + H2O = 1-hexadecanoyl-sn-glycero-3-phosphoethanolamine + (9Z,12Z)-octadecadienoate + H(+)</text>
        <dbReference type="Rhea" id="RHEA:40815"/>
        <dbReference type="ChEBI" id="CHEBI:15377"/>
        <dbReference type="ChEBI" id="CHEBI:15378"/>
        <dbReference type="ChEBI" id="CHEBI:30245"/>
        <dbReference type="ChEBI" id="CHEBI:73004"/>
        <dbReference type="ChEBI" id="CHEBI:73008"/>
    </reaction>
    <physiologicalReaction direction="left-to-right" evidence="11">
        <dbReference type="Rhea" id="RHEA:40816"/>
    </physiologicalReaction>
</comment>
<comment type="catalytic activity">
    <reaction evidence="6">
        <text>1-hexadecanoyl-2-(5Z,8Z,11Z,14Z-eicosatetraenoyl)-sn-glycero-3-phosphoethanolamine + H2O = 1-hexadecanoyl-sn-glycero-3-phosphoethanolamine + (5Z,8Z,11Z,14Z)-eicosatetraenoate + H(+)</text>
        <dbReference type="Rhea" id="RHEA:40431"/>
        <dbReference type="ChEBI" id="CHEBI:15377"/>
        <dbReference type="ChEBI" id="CHEBI:15378"/>
        <dbReference type="ChEBI" id="CHEBI:32395"/>
        <dbReference type="ChEBI" id="CHEBI:73004"/>
        <dbReference type="ChEBI" id="CHEBI:73009"/>
    </reaction>
    <physiologicalReaction direction="left-to-right" evidence="11">
        <dbReference type="Rhea" id="RHEA:40432"/>
    </physiologicalReaction>
</comment>
<comment type="catalytic activity">
    <reaction evidence="2">
        <text>1-hexadecanoyl-2-(9Z-octadecenoyl)-sn-glycero-3-phosphocholine + H2O = 1-hexadecanoyl-sn-glycero-3-phosphocholine + (9Z)-octadecenoate + H(+)</text>
        <dbReference type="Rhea" id="RHEA:38779"/>
        <dbReference type="ChEBI" id="CHEBI:15377"/>
        <dbReference type="ChEBI" id="CHEBI:15378"/>
        <dbReference type="ChEBI" id="CHEBI:30823"/>
        <dbReference type="ChEBI" id="CHEBI:72998"/>
        <dbReference type="ChEBI" id="CHEBI:73001"/>
    </reaction>
    <physiologicalReaction direction="left-to-right" evidence="2">
        <dbReference type="Rhea" id="RHEA:38780"/>
    </physiologicalReaction>
</comment>
<comment type="catalytic activity">
    <reaction evidence="2">
        <text>1-hexadecanoyl-2-(9Z-octadecenoyl)-sn-glycero-3-phospho-L-serine + H2O = 1-hexadecanoyl-sn-glycero-3-phospho-L-serine + (9Z)-octadecenoate + H(+)</text>
        <dbReference type="Rhea" id="RHEA:41752"/>
        <dbReference type="ChEBI" id="CHEBI:15377"/>
        <dbReference type="ChEBI" id="CHEBI:15378"/>
        <dbReference type="ChEBI" id="CHEBI:30823"/>
        <dbReference type="ChEBI" id="CHEBI:75020"/>
        <dbReference type="ChEBI" id="CHEBI:75029"/>
    </reaction>
    <physiologicalReaction direction="left-to-right" evidence="2">
        <dbReference type="Rhea" id="RHEA:41753"/>
    </physiologicalReaction>
</comment>
<comment type="cofactor">
    <cofactor evidence="2">
        <name>Ca(2+)</name>
        <dbReference type="ChEBI" id="CHEBI:29108"/>
    </cofactor>
    <text evidence="2">Binds 1 Ca(2+) ion per subunit.</text>
</comment>
<comment type="biophysicochemical properties">
    <phDependence>
        <text evidence="5 6">Optimum pH is 6.0-7.0.</text>
    </phDependence>
</comment>
<comment type="subcellular location">
    <subcellularLocation>
        <location evidence="6">Secreted</location>
    </subcellularLocation>
    <subcellularLocation>
        <location>Cell membrane</location>
        <topology evidence="6">Peripheral membrane protein</topology>
    </subcellularLocation>
</comment>
<comment type="alternative products">
    <event type="alternative splicing"/>
    <isoform>
        <id>Q9QZT4-1</id>
        <name>1</name>
        <sequence type="displayed"/>
    </isoform>
    <isoform>
        <id>Q9QZT4-2</id>
        <name>2</name>
        <sequence type="described" ref="VSP_037525"/>
    </isoform>
</comment>
<comment type="tissue specificity">
    <text evidence="5">Strongly expressed in testis.</text>
</comment>
<comment type="developmental stage">
    <text evidence="5">Strongly expressed during embryogenesis.</text>
</comment>
<comment type="induction">
    <text evidence="6">Strongly up-regulated by lipopolysaccharide (LPS) in brain, heart, liver, colon and testis.</text>
</comment>
<comment type="miscellaneous">
    <molecule>Isoform 2</molecule>
    <text evidence="10">No signal peptide could be predicted in this isoform, challenging its subcellular location within the secretory pathway and hence the formation of disulfide bonds, which are required for its activity.</text>
</comment>
<comment type="similarity">
    <text evidence="10">Belongs to the phospholipase A2 family.</text>
</comment>
<feature type="signal peptide" evidence="3">
    <location>
        <begin position="1"/>
        <end position="20"/>
    </location>
</feature>
<feature type="chain" id="PRO_0000022760" description="Group IIF secretory phospholipase A2">
    <location>
        <begin position="21"/>
        <end position="168"/>
    </location>
</feature>
<feature type="region of interest" description="Required for localization on the plasma membrane" evidence="6">
    <location>
        <begin position="139"/>
        <end position="168"/>
    </location>
</feature>
<feature type="active site" evidence="4">
    <location>
        <position position="67"/>
    </location>
</feature>
<feature type="active site" evidence="4">
    <location>
        <position position="114"/>
    </location>
</feature>
<feature type="binding site" evidence="1">
    <location>
        <position position="47"/>
    </location>
    <ligand>
        <name>Ca(2+)</name>
        <dbReference type="ChEBI" id="CHEBI:29108"/>
    </ligand>
</feature>
<feature type="binding site" evidence="1">
    <location>
        <position position="49"/>
    </location>
    <ligand>
        <name>Ca(2+)</name>
        <dbReference type="ChEBI" id="CHEBI:29108"/>
    </ligand>
</feature>
<feature type="binding site" evidence="1">
    <location>
        <position position="51"/>
    </location>
    <ligand>
        <name>Ca(2+)</name>
        <dbReference type="ChEBI" id="CHEBI:29108"/>
    </ligand>
</feature>
<feature type="binding site" evidence="1">
    <location>
        <position position="68"/>
    </location>
    <ligand>
        <name>Ca(2+)</name>
        <dbReference type="ChEBI" id="CHEBI:29108"/>
    </ligand>
</feature>
<feature type="glycosylation site" description="N-linked (GlcNAc...) asparagine" evidence="3">
    <location>
        <position position="92"/>
    </location>
</feature>
<feature type="glycosylation site" description="N-linked (GlcNAc...) asparagine" evidence="3">
    <location>
        <position position="102"/>
    </location>
</feature>
<feature type="glycosylation site" description="N-linked (GlcNAc...) asparagine" evidence="3">
    <location>
        <position position="144"/>
    </location>
</feature>
<feature type="disulfide bond" evidence="1">
    <location>
        <begin position="46"/>
        <end position="138"/>
    </location>
</feature>
<feature type="disulfide bond" evidence="1">
    <location>
        <begin position="48"/>
        <end position="64"/>
    </location>
</feature>
<feature type="disulfide bond" evidence="1">
    <location>
        <begin position="63"/>
        <end position="120"/>
    </location>
</feature>
<feature type="disulfide bond" evidence="1">
    <location>
        <begin position="69"/>
        <end position="145"/>
    </location>
</feature>
<feature type="disulfide bond" evidence="1">
    <location>
        <begin position="70"/>
        <end position="113"/>
    </location>
</feature>
<feature type="disulfide bond" evidence="1">
    <location>
        <begin position="79"/>
        <end position="106"/>
    </location>
</feature>
<feature type="disulfide bond" evidence="1">
    <location>
        <begin position="98"/>
        <end position="111"/>
    </location>
</feature>
<feature type="splice variant" id="VSP_037525" description="In isoform 2." evidence="8 9">
    <original>M</original>
    <variation>MADGAQANPKGFRKKALVKHSTGRKSPSLRASPSKTSRSSLGM</variation>
    <location>
        <position position="1"/>
    </location>
</feature>
<feature type="mutagenesis site" description="Loss of catalytic activity." evidence="6">
    <original>G</original>
    <variation>S</variation>
    <location>
        <position position="49"/>
    </location>
</feature>
<feature type="mutagenesis site" description="No effect on lipase activity toward 1-palmitoyl-2-arachidonoyl-phosphatidylethanolamine (2-AA-PE)." evidence="6">
    <original>C</original>
    <variation>S</variation>
    <location>
        <position position="157"/>
    </location>
</feature>
<reference key="1">
    <citation type="journal article" date="1999" name="J. Biol. Chem.">
        <title>On the diversity of secreted phospholipases A2. Cloning, tissue distribution, and functional expression of two novel mouse group II enzymes.</title>
        <authorList>
            <person name="Valentin E."/>
            <person name="Ghomashchi F."/>
            <person name="Gelb M.H."/>
            <person name="Lazdunski M."/>
            <person name="Lambeau G."/>
        </authorList>
    </citation>
    <scope>NUCLEOTIDE SEQUENCE [MRNA] (ISOFORM 1)</scope>
    <scope>FUNCTION</scope>
    <scope>TISSUE SPECIFICITY</scope>
    <scope>DEVELOPMENTAL STAGE</scope>
    <scope>BIOPHYSICOCHEMICAL PROPERTIES</scope>
</reference>
<reference key="2">
    <citation type="journal article" date="2005" name="Science">
        <title>The transcriptional landscape of the mammalian genome.</title>
        <authorList>
            <person name="Carninci P."/>
            <person name="Kasukawa T."/>
            <person name="Katayama S."/>
            <person name="Gough J."/>
            <person name="Frith M.C."/>
            <person name="Maeda N."/>
            <person name="Oyama R."/>
            <person name="Ravasi T."/>
            <person name="Lenhard B."/>
            <person name="Wells C."/>
            <person name="Kodzius R."/>
            <person name="Shimokawa K."/>
            <person name="Bajic V.B."/>
            <person name="Brenner S.E."/>
            <person name="Batalov S."/>
            <person name="Forrest A.R."/>
            <person name="Zavolan M."/>
            <person name="Davis M.J."/>
            <person name="Wilming L.G."/>
            <person name="Aidinis V."/>
            <person name="Allen J.E."/>
            <person name="Ambesi-Impiombato A."/>
            <person name="Apweiler R."/>
            <person name="Aturaliya R.N."/>
            <person name="Bailey T.L."/>
            <person name="Bansal M."/>
            <person name="Baxter L."/>
            <person name="Beisel K.W."/>
            <person name="Bersano T."/>
            <person name="Bono H."/>
            <person name="Chalk A.M."/>
            <person name="Chiu K.P."/>
            <person name="Choudhary V."/>
            <person name="Christoffels A."/>
            <person name="Clutterbuck D.R."/>
            <person name="Crowe M.L."/>
            <person name="Dalla E."/>
            <person name="Dalrymple B.P."/>
            <person name="de Bono B."/>
            <person name="Della Gatta G."/>
            <person name="di Bernardo D."/>
            <person name="Down T."/>
            <person name="Engstrom P."/>
            <person name="Fagiolini M."/>
            <person name="Faulkner G."/>
            <person name="Fletcher C.F."/>
            <person name="Fukushima T."/>
            <person name="Furuno M."/>
            <person name="Futaki S."/>
            <person name="Gariboldi M."/>
            <person name="Georgii-Hemming P."/>
            <person name="Gingeras T.R."/>
            <person name="Gojobori T."/>
            <person name="Green R.E."/>
            <person name="Gustincich S."/>
            <person name="Harbers M."/>
            <person name="Hayashi Y."/>
            <person name="Hensch T.K."/>
            <person name="Hirokawa N."/>
            <person name="Hill D."/>
            <person name="Huminiecki L."/>
            <person name="Iacono M."/>
            <person name="Ikeo K."/>
            <person name="Iwama A."/>
            <person name="Ishikawa T."/>
            <person name="Jakt M."/>
            <person name="Kanapin A."/>
            <person name="Katoh M."/>
            <person name="Kawasawa Y."/>
            <person name="Kelso J."/>
            <person name="Kitamura H."/>
            <person name="Kitano H."/>
            <person name="Kollias G."/>
            <person name="Krishnan S.P."/>
            <person name="Kruger A."/>
            <person name="Kummerfeld S.K."/>
            <person name="Kurochkin I.V."/>
            <person name="Lareau L.F."/>
            <person name="Lazarevic D."/>
            <person name="Lipovich L."/>
            <person name="Liu J."/>
            <person name="Liuni S."/>
            <person name="McWilliam S."/>
            <person name="Madan Babu M."/>
            <person name="Madera M."/>
            <person name="Marchionni L."/>
            <person name="Matsuda H."/>
            <person name="Matsuzawa S."/>
            <person name="Miki H."/>
            <person name="Mignone F."/>
            <person name="Miyake S."/>
            <person name="Morris K."/>
            <person name="Mottagui-Tabar S."/>
            <person name="Mulder N."/>
            <person name="Nakano N."/>
            <person name="Nakauchi H."/>
            <person name="Ng P."/>
            <person name="Nilsson R."/>
            <person name="Nishiguchi S."/>
            <person name="Nishikawa S."/>
            <person name="Nori F."/>
            <person name="Ohara O."/>
            <person name="Okazaki Y."/>
            <person name="Orlando V."/>
            <person name="Pang K.C."/>
            <person name="Pavan W.J."/>
            <person name="Pavesi G."/>
            <person name="Pesole G."/>
            <person name="Petrovsky N."/>
            <person name="Piazza S."/>
            <person name="Reed J."/>
            <person name="Reid J.F."/>
            <person name="Ring B.Z."/>
            <person name="Ringwald M."/>
            <person name="Rost B."/>
            <person name="Ruan Y."/>
            <person name="Salzberg S.L."/>
            <person name="Sandelin A."/>
            <person name="Schneider C."/>
            <person name="Schoenbach C."/>
            <person name="Sekiguchi K."/>
            <person name="Semple C.A."/>
            <person name="Seno S."/>
            <person name="Sessa L."/>
            <person name="Sheng Y."/>
            <person name="Shibata Y."/>
            <person name="Shimada H."/>
            <person name="Shimada K."/>
            <person name="Silva D."/>
            <person name="Sinclair B."/>
            <person name="Sperling S."/>
            <person name="Stupka E."/>
            <person name="Sugiura K."/>
            <person name="Sultana R."/>
            <person name="Takenaka Y."/>
            <person name="Taki K."/>
            <person name="Tammoja K."/>
            <person name="Tan S.L."/>
            <person name="Tang S."/>
            <person name="Taylor M.S."/>
            <person name="Tegner J."/>
            <person name="Teichmann S.A."/>
            <person name="Ueda H.R."/>
            <person name="van Nimwegen E."/>
            <person name="Verardo R."/>
            <person name="Wei C.L."/>
            <person name="Yagi K."/>
            <person name="Yamanishi H."/>
            <person name="Zabarovsky E."/>
            <person name="Zhu S."/>
            <person name="Zimmer A."/>
            <person name="Hide W."/>
            <person name="Bult C."/>
            <person name="Grimmond S.M."/>
            <person name="Teasdale R.D."/>
            <person name="Liu E.T."/>
            <person name="Brusic V."/>
            <person name="Quackenbush J."/>
            <person name="Wahlestedt C."/>
            <person name="Mattick J.S."/>
            <person name="Hume D.A."/>
            <person name="Kai C."/>
            <person name="Sasaki D."/>
            <person name="Tomaru Y."/>
            <person name="Fukuda S."/>
            <person name="Kanamori-Katayama M."/>
            <person name="Suzuki M."/>
            <person name="Aoki J."/>
            <person name="Arakawa T."/>
            <person name="Iida J."/>
            <person name="Imamura K."/>
            <person name="Itoh M."/>
            <person name="Kato T."/>
            <person name="Kawaji H."/>
            <person name="Kawagashira N."/>
            <person name="Kawashima T."/>
            <person name="Kojima M."/>
            <person name="Kondo S."/>
            <person name="Konno H."/>
            <person name="Nakano K."/>
            <person name="Ninomiya N."/>
            <person name="Nishio T."/>
            <person name="Okada M."/>
            <person name="Plessy C."/>
            <person name="Shibata K."/>
            <person name="Shiraki T."/>
            <person name="Suzuki S."/>
            <person name="Tagami M."/>
            <person name="Waki K."/>
            <person name="Watahiki A."/>
            <person name="Okamura-Oho Y."/>
            <person name="Suzuki H."/>
            <person name="Kawai J."/>
            <person name="Hayashizaki Y."/>
        </authorList>
    </citation>
    <scope>NUCLEOTIDE SEQUENCE [LARGE SCALE MRNA] (ISOFORM 2)</scope>
    <source>
        <strain>C57BL/6J</strain>
        <tissue>Head</tissue>
    </source>
</reference>
<reference key="3">
    <citation type="journal article" date="2009" name="PLoS Biol.">
        <title>Lineage-specific biology revealed by a finished genome assembly of the mouse.</title>
        <authorList>
            <person name="Church D.M."/>
            <person name="Goodstadt L."/>
            <person name="Hillier L.W."/>
            <person name="Zody M.C."/>
            <person name="Goldstein S."/>
            <person name="She X."/>
            <person name="Bult C.J."/>
            <person name="Agarwala R."/>
            <person name="Cherry J.L."/>
            <person name="DiCuccio M."/>
            <person name="Hlavina W."/>
            <person name="Kapustin Y."/>
            <person name="Meric P."/>
            <person name="Maglott D."/>
            <person name="Birtle Z."/>
            <person name="Marques A.C."/>
            <person name="Graves T."/>
            <person name="Zhou S."/>
            <person name="Teague B."/>
            <person name="Potamousis K."/>
            <person name="Churas C."/>
            <person name="Place M."/>
            <person name="Herschleb J."/>
            <person name="Runnheim R."/>
            <person name="Forrest D."/>
            <person name="Amos-Landgraf J."/>
            <person name="Schwartz D.C."/>
            <person name="Cheng Z."/>
            <person name="Lindblad-Toh K."/>
            <person name="Eichler E.E."/>
            <person name="Ponting C.P."/>
        </authorList>
    </citation>
    <scope>NUCLEOTIDE SEQUENCE [LARGE SCALE GENOMIC DNA]</scope>
    <source>
        <strain>C57BL/6J</strain>
    </source>
</reference>
<reference key="4">
    <citation type="journal article" date="2004" name="Genome Res.">
        <title>The status, quality, and expansion of the NIH full-length cDNA project: the Mammalian Gene Collection (MGC).</title>
        <authorList>
            <consortium name="The MGC Project Team"/>
        </authorList>
    </citation>
    <scope>NUCLEOTIDE SEQUENCE [LARGE SCALE MRNA] (ISOFORM 2)</scope>
    <source>
        <tissue>Brain</tissue>
    </source>
</reference>
<reference key="5">
    <citation type="journal article" date="2002" name="J. Biol. Chem.">
        <title>Cellular arachidonate-releasing function and inflammation-associated expression of group IIF secretory phospholipase A2.</title>
        <authorList>
            <person name="Murakami M."/>
            <person name="Yoshihara K."/>
            <person name="Shimbara S."/>
            <person name="Lambeau G."/>
            <person name="Gelb M.H."/>
            <person name="Singer A.G."/>
            <person name="Sawada M."/>
            <person name="Inagaki N."/>
            <person name="Nagai H."/>
            <person name="Ishihara M."/>
            <person name="Ishikawa Y."/>
            <person name="Ishii T."/>
            <person name="Kudo I."/>
        </authorList>
    </citation>
    <scope>FUNCTION</scope>
    <scope>CATALYTIC ACTIVITY</scope>
    <scope>BIOPHYSICOCHEMICAL PROPERTIES</scope>
    <scope>SUBCELLULAR LOCATION</scope>
    <scope>MUTAGENESIS OF GLY-49 AND CYS-157</scope>
    <scope>INDUCTION BY LPS</scope>
</reference>
<name>PA2GF_MOUSE</name>